<protein>
    <recommendedName>
        <fullName evidence="1">Small ribosomal subunit protein uS19</fullName>
    </recommendedName>
    <alternativeName>
        <fullName evidence="2">30S ribosomal protein S19</fullName>
    </alternativeName>
</protein>
<keyword id="KW-0687">Ribonucleoprotein</keyword>
<keyword id="KW-0689">Ribosomal protein</keyword>
<keyword id="KW-0694">RNA-binding</keyword>
<keyword id="KW-0699">rRNA-binding</keyword>
<dbReference type="EMBL" id="CP000235">
    <property type="protein sequence ID" value="ABD44056.1"/>
    <property type="molecule type" value="Genomic_DNA"/>
</dbReference>
<dbReference type="RefSeq" id="WP_011450419.1">
    <property type="nucleotide sequence ID" value="NC_007797.1"/>
</dbReference>
<dbReference type="SMR" id="Q2GL55"/>
<dbReference type="STRING" id="212042.APH_0284"/>
<dbReference type="PaxDb" id="212042-APH_0284"/>
<dbReference type="EnsemblBacteria" id="ABD44056">
    <property type="protein sequence ID" value="ABD44056"/>
    <property type="gene ID" value="APH_0284"/>
</dbReference>
<dbReference type="GeneID" id="92747519"/>
<dbReference type="KEGG" id="aph:APH_0284"/>
<dbReference type="eggNOG" id="COG0185">
    <property type="taxonomic scope" value="Bacteria"/>
</dbReference>
<dbReference type="HOGENOM" id="CLU_144911_0_1_5"/>
<dbReference type="Proteomes" id="UP000001943">
    <property type="component" value="Chromosome"/>
</dbReference>
<dbReference type="GO" id="GO:0005737">
    <property type="term" value="C:cytoplasm"/>
    <property type="evidence" value="ECO:0007669"/>
    <property type="project" value="UniProtKB-ARBA"/>
</dbReference>
<dbReference type="GO" id="GO:0015935">
    <property type="term" value="C:small ribosomal subunit"/>
    <property type="evidence" value="ECO:0007669"/>
    <property type="project" value="InterPro"/>
</dbReference>
<dbReference type="GO" id="GO:0019843">
    <property type="term" value="F:rRNA binding"/>
    <property type="evidence" value="ECO:0007669"/>
    <property type="project" value="UniProtKB-UniRule"/>
</dbReference>
<dbReference type="GO" id="GO:0003735">
    <property type="term" value="F:structural constituent of ribosome"/>
    <property type="evidence" value="ECO:0007669"/>
    <property type="project" value="InterPro"/>
</dbReference>
<dbReference type="GO" id="GO:0000028">
    <property type="term" value="P:ribosomal small subunit assembly"/>
    <property type="evidence" value="ECO:0007669"/>
    <property type="project" value="TreeGrafter"/>
</dbReference>
<dbReference type="GO" id="GO:0006412">
    <property type="term" value="P:translation"/>
    <property type="evidence" value="ECO:0007669"/>
    <property type="project" value="UniProtKB-UniRule"/>
</dbReference>
<dbReference type="FunFam" id="3.30.860.10:FF:000001">
    <property type="entry name" value="30S ribosomal protein S19"/>
    <property type="match status" value="1"/>
</dbReference>
<dbReference type="Gene3D" id="3.30.860.10">
    <property type="entry name" value="30s Ribosomal Protein S19, Chain A"/>
    <property type="match status" value="1"/>
</dbReference>
<dbReference type="HAMAP" id="MF_00531">
    <property type="entry name" value="Ribosomal_uS19"/>
    <property type="match status" value="1"/>
</dbReference>
<dbReference type="InterPro" id="IPR002222">
    <property type="entry name" value="Ribosomal_uS19"/>
</dbReference>
<dbReference type="InterPro" id="IPR005732">
    <property type="entry name" value="Ribosomal_uS19_bac-type"/>
</dbReference>
<dbReference type="InterPro" id="IPR020934">
    <property type="entry name" value="Ribosomal_uS19_CS"/>
</dbReference>
<dbReference type="InterPro" id="IPR023575">
    <property type="entry name" value="Ribosomal_uS19_SF"/>
</dbReference>
<dbReference type="NCBIfam" id="TIGR01050">
    <property type="entry name" value="rpsS_bact"/>
    <property type="match status" value="1"/>
</dbReference>
<dbReference type="PANTHER" id="PTHR11880">
    <property type="entry name" value="RIBOSOMAL PROTEIN S19P FAMILY MEMBER"/>
    <property type="match status" value="1"/>
</dbReference>
<dbReference type="PANTHER" id="PTHR11880:SF8">
    <property type="entry name" value="SMALL RIBOSOMAL SUBUNIT PROTEIN US19M"/>
    <property type="match status" value="1"/>
</dbReference>
<dbReference type="Pfam" id="PF00203">
    <property type="entry name" value="Ribosomal_S19"/>
    <property type="match status" value="1"/>
</dbReference>
<dbReference type="PIRSF" id="PIRSF002144">
    <property type="entry name" value="Ribosomal_S19"/>
    <property type="match status" value="1"/>
</dbReference>
<dbReference type="PRINTS" id="PR00975">
    <property type="entry name" value="RIBOSOMALS19"/>
</dbReference>
<dbReference type="SUPFAM" id="SSF54570">
    <property type="entry name" value="Ribosomal protein S19"/>
    <property type="match status" value="1"/>
</dbReference>
<dbReference type="PROSITE" id="PS00323">
    <property type="entry name" value="RIBOSOMAL_S19"/>
    <property type="match status" value="1"/>
</dbReference>
<gene>
    <name evidence="1" type="primary">rpsS</name>
    <name type="ordered locus">APH_0284</name>
</gene>
<feature type="chain" id="PRO_0000354284" description="Small ribosomal subunit protein uS19">
    <location>
        <begin position="1"/>
        <end position="94"/>
    </location>
</feature>
<comment type="function">
    <text evidence="1">Protein S19 forms a complex with S13 that binds strongly to the 16S ribosomal RNA.</text>
</comment>
<comment type="similarity">
    <text evidence="1">Belongs to the universal ribosomal protein uS19 family.</text>
</comment>
<reference key="1">
    <citation type="journal article" date="2006" name="PLoS Genet.">
        <title>Comparative genomics of emerging human ehrlichiosis agents.</title>
        <authorList>
            <person name="Dunning Hotopp J.C."/>
            <person name="Lin M."/>
            <person name="Madupu R."/>
            <person name="Crabtree J."/>
            <person name="Angiuoli S.V."/>
            <person name="Eisen J.A."/>
            <person name="Seshadri R."/>
            <person name="Ren Q."/>
            <person name="Wu M."/>
            <person name="Utterback T.R."/>
            <person name="Smith S."/>
            <person name="Lewis M."/>
            <person name="Khouri H."/>
            <person name="Zhang C."/>
            <person name="Niu H."/>
            <person name="Lin Q."/>
            <person name="Ohashi N."/>
            <person name="Zhi N."/>
            <person name="Nelson W.C."/>
            <person name="Brinkac L.M."/>
            <person name="Dodson R.J."/>
            <person name="Rosovitz M.J."/>
            <person name="Sundaram J.P."/>
            <person name="Daugherty S.C."/>
            <person name="Davidsen T."/>
            <person name="Durkin A.S."/>
            <person name="Gwinn M.L."/>
            <person name="Haft D.H."/>
            <person name="Selengut J.D."/>
            <person name="Sullivan S.A."/>
            <person name="Zafar N."/>
            <person name="Zhou L."/>
            <person name="Benahmed F."/>
            <person name="Forberger H."/>
            <person name="Halpin R."/>
            <person name="Mulligan S."/>
            <person name="Robinson J."/>
            <person name="White O."/>
            <person name="Rikihisa Y."/>
            <person name="Tettelin H."/>
        </authorList>
    </citation>
    <scope>NUCLEOTIDE SEQUENCE [LARGE SCALE GENOMIC DNA]</scope>
    <source>
        <strain>HZ</strain>
    </source>
</reference>
<sequence>MSRSVKKPPFCAPHVLRLANRVIASNRTSVVINIHSRSSVILNKFVGLTFGVYNGKTYVPVKVTDNIVGRKFGEFSPTRRFLGHAGDKKVSRKG</sequence>
<accession>Q2GL55</accession>
<evidence type="ECO:0000255" key="1">
    <source>
        <dbReference type="HAMAP-Rule" id="MF_00531"/>
    </source>
</evidence>
<evidence type="ECO:0000305" key="2"/>
<proteinExistence type="inferred from homology"/>
<organism>
    <name type="scientific">Anaplasma phagocytophilum (strain HZ)</name>
    <dbReference type="NCBI Taxonomy" id="212042"/>
    <lineage>
        <taxon>Bacteria</taxon>
        <taxon>Pseudomonadati</taxon>
        <taxon>Pseudomonadota</taxon>
        <taxon>Alphaproteobacteria</taxon>
        <taxon>Rickettsiales</taxon>
        <taxon>Anaplasmataceae</taxon>
        <taxon>Anaplasma</taxon>
        <taxon>phagocytophilum group</taxon>
    </lineage>
</organism>
<name>RS19_ANAPZ</name>